<accession>B3SV56</accession>
<sequence length="614" mass="66868">MTTLDSNNNTGGVITYIGSSGSSPNRTSPESLYSDSSNGSFQSLTQGCPTYFPPSPTGSLTQDPARSFGSIPPSLGDDGSPSSSSSSSSSSSSSFYNGSPPGGLQVALEDGNRVSPSKSTSNITKLNGMVLLCKVCGDVASGFHYGVHACEGCKGFFRRSIQQNIQYKRCLKNENCSIVRINRNRCQQCRFKKCLSVGMSRDAVRFGRIPKREKQRMLAEMQSAMNLANNQLSSQCPLETPPTQHPTPGPMGPSPPPAPAPSPLVGFSQFPQQLTPPRSPSPEPTVEDVISQVARAHREIFTYAHDKLGTSPGNFNANHASGNRPATTPHRWESQGCPPAPNDNIMAAQRHNEALNSLRQASSSYPPPWPPGATHHSCHQPNSNGHRLCPTHVYPAPEGEAPVNSPRQGNSKNVLLACPMNMYPHGRSGRTVQEIWEDFSMSFTPAVREVVEFAKHIPGFRDLSQHDQVTLLKAGTFEVLMVRFASLFNVKDQTVMFLSRTTYSLQELGAMGMGDLLNAMFDFSEKLNSLALTEEELGLFTAVVLVSADRSGMENSASVEQLQETLLRALRALVLKNRPSETSRFTKLLLKLPDLRTLNNMHSEKLLSFRVDAQ</sequence>
<gene>
    <name type="primary">NR1D1</name>
</gene>
<evidence type="ECO:0000250" key="1"/>
<evidence type="ECO:0000250" key="2">
    <source>
        <dbReference type="UniProtKB" id="P20393"/>
    </source>
</evidence>
<evidence type="ECO:0000250" key="3">
    <source>
        <dbReference type="UniProtKB" id="Q3UV55"/>
    </source>
</evidence>
<evidence type="ECO:0000255" key="4">
    <source>
        <dbReference type="PROSITE-ProRule" id="PRU00407"/>
    </source>
</evidence>
<evidence type="ECO:0000255" key="5">
    <source>
        <dbReference type="PROSITE-ProRule" id="PRU01189"/>
    </source>
</evidence>
<evidence type="ECO:0000256" key="6">
    <source>
        <dbReference type="SAM" id="MobiDB-lite"/>
    </source>
</evidence>
<evidence type="ECO:0000305" key="7"/>
<organism>
    <name type="scientific">Ovis aries</name>
    <name type="common">Sheep</name>
    <dbReference type="NCBI Taxonomy" id="9940"/>
    <lineage>
        <taxon>Eukaryota</taxon>
        <taxon>Metazoa</taxon>
        <taxon>Chordata</taxon>
        <taxon>Craniata</taxon>
        <taxon>Vertebrata</taxon>
        <taxon>Euteleostomi</taxon>
        <taxon>Mammalia</taxon>
        <taxon>Eutheria</taxon>
        <taxon>Laurasiatheria</taxon>
        <taxon>Artiodactyla</taxon>
        <taxon>Ruminantia</taxon>
        <taxon>Pecora</taxon>
        <taxon>Bovidae</taxon>
        <taxon>Caprinae</taxon>
        <taxon>Ovis</taxon>
    </lineage>
</organism>
<comment type="function">
    <text evidence="3">Transcriptional repressor which coordinates circadian rhythm and metabolic pathways in a heme-dependent manner. Integral component of the complex transcription machinery that governs circadian rhythmicity and forms a critical negative limb of the circadian clock by directly repressing the expression of core clock components BMAL1, CLOCK and CRY1. Also regulates genes involved in metabolic functions, including lipid and bile acid metabolism, adipogenesis, gluconeogenesis and the macrophage inflammatory response. Acts as a receptor for heme which stimulates its interaction with the NCOR1/HDAC3 corepressor complex, enhancing transcriptional repression. Recognizes two classes of DNA response elements within the promoter of its target genes and can bind to DNA as either monomers or homodimers, depending on the nature of the response element. Binds as a monomer to a response element composed of the consensus half-site motif 5'-[A/G]GGTCA-3' preceded by an A/T-rich 5' sequence (RevRE), or as a homodimer to a direct repeat of the core motif spaced by two nucleotides (RevDR-2). Acts as a potent competitive repressor of ROR alpha (RORA) function and regulates the levels of its ligand heme by repressing the expression of PPARGC1A, a potent inducer of heme synthesis. Regulates lipid metabolism by repressing the expression of APOC3 and by influencing the activity of sterol response element binding proteins (SREBPs); represses INSIG2 which interferes with the proteolytic activation of SREBPs which in turn govern the rhythmic expression of enzymes with key functions in sterol and fatty acid synthesis. Regulates gluconeogenesis via repression of G6PC1 and PEPCK and adipocyte differentiation via repression of PPARG. Regulates glucagon release in pancreatic alpha-cells via the AMPK-NAMPT-SIRT1 pathway and the proliferation, glucose-induced insulin secretion and expression of key lipogenic genes in pancreatic-beta cells. Positively regulates bile acid synthesis by increasing hepatic expression of CYP7A1 via repression of NR0B2 and NFIL3 which are negative regulators of CYP7A1. Modulates skeletal muscle oxidative capacity by regulating mitochondrial biogenesis and autophagy; controls mitochondrial biogenesis and respiration by interfering with the STK11-PRKAA1/2-SIRT1-PPARGC1A signaling pathway. Represses the expression of SERPINE1/PAI1, an important modulator of cardiovascular disease and the expression of inflammatory cytokines and chemokines in macrophages. Represses gene expression at a distance in macrophages by inhibiting the transcription of enhancer-derived RNAs (eRNAs). Plays a role in the circadian regulation of body temperature and negatively regulates thermogenic transcriptional programs in brown adipose tissue (BAT); imposes a circadian oscillation in BAT activity, increasing body temperature when awake and depressing thermogenesis during sleep. In concert with NR2E3, regulates transcriptional networks critical for photoreceptor development and function. In addition to its activity as a repressor, can also act as a transcriptional activator. In the ovarian granulosa cells acts as a transcriptional activator of STAR which plays a role in steroid biosynthesis. In collaboration with SP1, activates GJA1 transcription in a heme-independent manner (By similarity). Represses the transcription of CYP2B10, CYP4A10 and CYP4A14 (By similarity). Represses the transcription of CES2 (By similarity). Represses and regulates the circadian expression of TSHB in a NCOR1-dependent manner (By similarity). Negatively regulates the protein stability of NR3C1 and influences the time-dependent subcellular distribution of NR3C1, thereby affecting its transcriptional regulatory activity (By similarity). Plays a critical role in the circadian control of neutrophilic inflammation in the lung; under resting, non-stress conditions, acts as a rhythmic repressor to limit inflammatory activity whereas in the presence of inflammatory triggers undergoes ubiquitin-mediated degradation thereby relieving inhibition of the inflammatory response (By similarity). Plays a key role in the circadian regulation of microglial activation and neuroinflammation; suppresses microglial activation through the NF-kappaB pathway in the central nervous system (By similarity). Plays a role in the regulation of the diurnal rhythms of lipid and protein metabolism in the skeletal muscle via transcriptional repression of genes controlling lipid and amino acid metabolism in the muscle (By similarity).</text>
</comment>
<comment type="subunit">
    <text evidence="2 3">Binds DNA as a monomer or a homodimer (By similarity). Interacts with C1D, NR2E3, SP1 and ZNHIT1 (By similarity). Interacts with OPHN1 (via C-terminus) (By similarity). Interacts with PER2; the interaction associates PER2 to BMAL1 promoter region (By similarity). Interacts with CRY1 (By similarity). Interacts with CCAR2 (By similarity). Interacts with SIAH2 (By similarity). Interacts with FBXW7 and CDK1 (By similarity). Interacts with HUWE1 (By similarity). Interacts with NR0B2 (By similarity). Interacts with NFIL3 (By similarity). Interacts (via domain NR LBD) with HSP90AA1 and HSP90AB1 (By similarity).</text>
</comment>
<comment type="subcellular location">
    <subcellularLocation>
        <location evidence="4">Nucleus</location>
    </subcellularLocation>
    <subcellularLocation>
        <location evidence="3">Cytoplasm</location>
    </subcellularLocation>
    <subcellularLocation>
        <location evidence="3">Cell projection</location>
        <location evidence="3">Dendrite</location>
    </subcellularLocation>
    <subcellularLocation>
        <location evidence="3">Cell projection</location>
        <location evidence="3">Dendritic spine</location>
    </subcellularLocation>
    <text evidence="3">Localizes to the cytoplasm, dendrites and dendritic spine in the presence of OPHN1. Localizes predominantly to the nucleus at ZT8 whereas it is cytoplasmic at ZT20. Phosphorylation by CSNK1E enhances its cytoplasmic localization.</text>
</comment>
<comment type="tissue specificity">
    <text>Expressed in all tissues and cell lines examined. Expressed at high levels in some squamous carcinoma cell lines.</text>
</comment>
<comment type="domain">
    <text>Composed of three domains: a modulating N-terminal domain, a DNA-binding domain and a C-terminal ligand-binding domain.</text>
</comment>
<comment type="PTM">
    <text evidence="2 3">Ubiquitinated, leading to its proteasomal degradation (By similarity). Ubiquitinated by the SCF(FBXW7) complex when phosphorylated by CDK1 leading to its proteasomal degradation (By similarity). Ubiquitinated by SIAH2; leading to its proteasomal degradation (By similarity). Rapidly ubiquitinated in response to inflammatory triggers and sumoylation is a prerequisite to its ubiquitination (By similarity).</text>
</comment>
<comment type="PTM">
    <text evidence="3">Sumoylated by UBE2I, desumoylated by SENP1, and sumoylation is a prerequisite to its ubiquitination.</text>
</comment>
<comment type="PTM">
    <text evidence="3">Phosphorylated by CSNK1E; phosphorylation enhances its cytoplasmic localization.</text>
</comment>
<comment type="PTM">
    <text evidence="3">Undergoes lysosome-mediated degradation in a time-dependent manner in the liver.</text>
</comment>
<comment type="similarity">
    <text evidence="7">Belongs to the nuclear hormone receptor family. NR1 subfamily.</text>
</comment>
<protein>
    <recommendedName>
        <fullName>Nuclear receptor subfamily 1 group D member 1</fullName>
    </recommendedName>
    <alternativeName>
        <fullName>Rev-erbA-alpha</fullName>
    </alternativeName>
    <alternativeName>
        <fullName>V-erbA-related protein 1</fullName>
        <shortName>EAR-1</shortName>
    </alternativeName>
</protein>
<dbReference type="EMBL" id="EF988333">
    <property type="protein sequence ID" value="ABV53446.1"/>
    <property type="molecule type" value="mRNA"/>
</dbReference>
<dbReference type="RefSeq" id="NP_001124501.1">
    <property type="nucleotide sequence ID" value="NM_001131029.1"/>
</dbReference>
<dbReference type="SMR" id="B3SV56"/>
<dbReference type="STRING" id="9940.ENSOARP00000013954"/>
<dbReference type="PaxDb" id="9940-ENSOARP00000013954"/>
<dbReference type="GeneID" id="100174903"/>
<dbReference type="KEGG" id="oas:100174903"/>
<dbReference type="CTD" id="9572"/>
<dbReference type="eggNOG" id="KOG4846">
    <property type="taxonomic scope" value="Eukaryota"/>
</dbReference>
<dbReference type="OrthoDB" id="7634782at2759"/>
<dbReference type="Proteomes" id="UP000002356">
    <property type="component" value="Unplaced"/>
</dbReference>
<dbReference type="GO" id="GO:0005737">
    <property type="term" value="C:cytoplasm"/>
    <property type="evidence" value="ECO:0000250"/>
    <property type="project" value="UniProtKB"/>
</dbReference>
<dbReference type="GO" id="GO:0030425">
    <property type="term" value="C:dendrite"/>
    <property type="evidence" value="ECO:0000250"/>
    <property type="project" value="UniProtKB"/>
</dbReference>
<dbReference type="GO" id="GO:0043197">
    <property type="term" value="C:dendritic spine"/>
    <property type="evidence" value="ECO:0000250"/>
    <property type="project" value="UniProtKB"/>
</dbReference>
<dbReference type="GO" id="GO:0005634">
    <property type="term" value="C:nucleus"/>
    <property type="evidence" value="ECO:0000250"/>
    <property type="project" value="UniProtKB"/>
</dbReference>
<dbReference type="GO" id="GO:0070888">
    <property type="term" value="F:E-box binding"/>
    <property type="evidence" value="ECO:0000250"/>
    <property type="project" value="UniProtKB"/>
</dbReference>
<dbReference type="GO" id="GO:0004879">
    <property type="term" value="F:nuclear receptor activity"/>
    <property type="evidence" value="ECO:0007669"/>
    <property type="project" value="TreeGrafter"/>
</dbReference>
<dbReference type="GO" id="GO:0001222">
    <property type="term" value="F:transcription corepressor binding"/>
    <property type="evidence" value="ECO:0000250"/>
    <property type="project" value="UniProtKB"/>
</dbReference>
<dbReference type="GO" id="GO:0008270">
    <property type="term" value="F:zinc ion binding"/>
    <property type="evidence" value="ECO:0007669"/>
    <property type="project" value="UniProtKB-KW"/>
</dbReference>
<dbReference type="GO" id="GO:0030154">
    <property type="term" value="P:cell differentiation"/>
    <property type="evidence" value="ECO:0007669"/>
    <property type="project" value="UniProtKB-KW"/>
</dbReference>
<dbReference type="GO" id="GO:0071347">
    <property type="term" value="P:cellular response to interleukin-1"/>
    <property type="evidence" value="ECO:0000250"/>
    <property type="project" value="UniProtKB"/>
</dbReference>
<dbReference type="GO" id="GO:0071356">
    <property type="term" value="P:cellular response to tumor necrosis factor"/>
    <property type="evidence" value="ECO:0000250"/>
    <property type="project" value="UniProtKB"/>
</dbReference>
<dbReference type="GO" id="GO:0042632">
    <property type="term" value="P:cholesterol homeostasis"/>
    <property type="evidence" value="ECO:0000250"/>
    <property type="project" value="UniProtKB"/>
</dbReference>
<dbReference type="GO" id="GO:0032922">
    <property type="term" value="P:circadian regulation of gene expression"/>
    <property type="evidence" value="ECO:0000250"/>
    <property type="project" value="UniProtKB"/>
</dbReference>
<dbReference type="GO" id="GO:0060086">
    <property type="term" value="P:circadian temperature homeostasis"/>
    <property type="evidence" value="ECO:0000250"/>
    <property type="project" value="UniProtKB"/>
</dbReference>
<dbReference type="GO" id="GO:0005978">
    <property type="term" value="P:glycogen biosynthetic process"/>
    <property type="evidence" value="ECO:0000250"/>
    <property type="project" value="UniProtKB"/>
</dbReference>
<dbReference type="GO" id="GO:0009755">
    <property type="term" value="P:hormone-mediated signaling pathway"/>
    <property type="evidence" value="ECO:0007669"/>
    <property type="project" value="TreeGrafter"/>
</dbReference>
<dbReference type="GO" id="GO:0001678">
    <property type="term" value="P:intracellular glucose homeostasis"/>
    <property type="evidence" value="ECO:0000250"/>
    <property type="project" value="UniProtKB"/>
</dbReference>
<dbReference type="GO" id="GO:0061889">
    <property type="term" value="P:negative regulation of astrocyte activation"/>
    <property type="evidence" value="ECO:0000250"/>
    <property type="project" value="UniProtKB"/>
</dbReference>
<dbReference type="GO" id="GO:0043124">
    <property type="term" value="P:negative regulation of canonical NF-kappaB signal transduction"/>
    <property type="evidence" value="ECO:0000250"/>
    <property type="project" value="UniProtKB"/>
</dbReference>
<dbReference type="GO" id="GO:0045892">
    <property type="term" value="P:negative regulation of DNA-templated transcription"/>
    <property type="evidence" value="ECO:0000250"/>
    <property type="project" value="UniProtKB"/>
</dbReference>
<dbReference type="GO" id="GO:0050728">
    <property type="term" value="P:negative regulation of inflammatory response"/>
    <property type="evidence" value="ECO:0000250"/>
    <property type="project" value="UniProtKB"/>
</dbReference>
<dbReference type="GO" id="GO:1903979">
    <property type="term" value="P:negative regulation of microglial cell activation"/>
    <property type="evidence" value="ECO:0000250"/>
    <property type="project" value="UniProtKB"/>
</dbReference>
<dbReference type="GO" id="GO:0150079">
    <property type="term" value="P:negative regulation of neuroinflammatory response"/>
    <property type="evidence" value="ECO:0000250"/>
    <property type="project" value="UniProtKB"/>
</dbReference>
<dbReference type="GO" id="GO:0000122">
    <property type="term" value="P:negative regulation of transcription by RNA polymerase II"/>
    <property type="evidence" value="ECO:0007669"/>
    <property type="project" value="TreeGrafter"/>
</dbReference>
<dbReference type="GO" id="GO:0070859">
    <property type="term" value="P:positive regulation of bile acid biosynthetic process"/>
    <property type="evidence" value="ECO:0000250"/>
    <property type="project" value="UniProtKB"/>
</dbReference>
<dbReference type="GO" id="GO:0045893">
    <property type="term" value="P:positive regulation of DNA-templated transcription"/>
    <property type="evidence" value="ECO:0000250"/>
    <property type="project" value="UniProtKB"/>
</dbReference>
<dbReference type="GO" id="GO:0045944">
    <property type="term" value="P:positive regulation of transcription by RNA polymerase II"/>
    <property type="evidence" value="ECO:0007669"/>
    <property type="project" value="TreeGrafter"/>
</dbReference>
<dbReference type="GO" id="GO:0010498">
    <property type="term" value="P:proteasomal protein catabolic process"/>
    <property type="evidence" value="ECO:0000250"/>
    <property type="project" value="UniProtKB"/>
</dbReference>
<dbReference type="GO" id="GO:0031648">
    <property type="term" value="P:protein destabilization"/>
    <property type="evidence" value="ECO:0000250"/>
    <property type="project" value="UniProtKB"/>
</dbReference>
<dbReference type="GO" id="GO:0042752">
    <property type="term" value="P:regulation of circadian rhythm"/>
    <property type="evidence" value="ECO:0000250"/>
    <property type="project" value="UniProtKB"/>
</dbReference>
<dbReference type="GO" id="GO:0042749">
    <property type="term" value="P:regulation of circadian sleep/wake cycle"/>
    <property type="evidence" value="ECO:0000250"/>
    <property type="project" value="UniProtKB"/>
</dbReference>
<dbReference type="GO" id="GO:0045598">
    <property type="term" value="P:regulation of fat cell differentiation"/>
    <property type="evidence" value="ECO:0000250"/>
    <property type="project" value="UniProtKB"/>
</dbReference>
<dbReference type="GO" id="GO:0061178">
    <property type="term" value="P:regulation of insulin secretion involved in cellular response to glucose stimulus"/>
    <property type="evidence" value="ECO:0000250"/>
    <property type="project" value="UniProtKB"/>
</dbReference>
<dbReference type="GO" id="GO:0019216">
    <property type="term" value="P:regulation of lipid metabolic process"/>
    <property type="evidence" value="ECO:0000250"/>
    <property type="project" value="UniProtKB"/>
</dbReference>
<dbReference type="GO" id="GO:0061469">
    <property type="term" value="P:regulation of type B pancreatic cell proliferation"/>
    <property type="evidence" value="ECO:0000250"/>
    <property type="project" value="UniProtKB"/>
</dbReference>
<dbReference type="GO" id="GO:0044321">
    <property type="term" value="P:response to leptin"/>
    <property type="evidence" value="ECO:0000250"/>
    <property type="project" value="UniProtKB"/>
</dbReference>
<dbReference type="CDD" id="cd07166">
    <property type="entry name" value="NR_DBD_REV_ERB"/>
    <property type="match status" value="1"/>
</dbReference>
<dbReference type="FunFam" id="3.30.50.10:FF:000013">
    <property type="entry name" value="Nuclear receptor subfamily 1 group D member 2"/>
    <property type="match status" value="1"/>
</dbReference>
<dbReference type="Gene3D" id="3.30.50.10">
    <property type="entry name" value="Erythroid Transcription Factor GATA-1, subunit A"/>
    <property type="match status" value="1"/>
</dbReference>
<dbReference type="Gene3D" id="1.10.565.10">
    <property type="entry name" value="Retinoid X Receptor"/>
    <property type="match status" value="1"/>
</dbReference>
<dbReference type="InterPro" id="IPR035500">
    <property type="entry name" value="NHR-like_dom_sf"/>
</dbReference>
<dbReference type="InterPro" id="IPR000536">
    <property type="entry name" value="Nucl_hrmn_rcpt_lig-bd"/>
</dbReference>
<dbReference type="InterPro" id="IPR050234">
    <property type="entry name" value="Nuclear_hormone_rcpt_NR1"/>
</dbReference>
<dbReference type="InterPro" id="IPR001723">
    <property type="entry name" value="Nuclear_hrmn_rcpt"/>
</dbReference>
<dbReference type="InterPro" id="IPR001628">
    <property type="entry name" value="Znf_hrmn_rcpt"/>
</dbReference>
<dbReference type="InterPro" id="IPR013088">
    <property type="entry name" value="Znf_NHR/GATA"/>
</dbReference>
<dbReference type="PANTHER" id="PTHR24082">
    <property type="entry name" value="NUCLEAR HORMONE RECEPTOR"/>
    <property type="match status" value="1"/>
</dbReference>
<dbReference type="PANTHER" id="PTHR24082:SF113">
    <property type="entry name" value="NUCLEAR RECEPTOR SUBFAMILY 1 GROUP D MEMBER 1"/>
    <property type="match status" value="1"/>
</dbReference>
<dbReference type="Pfam" id="PF00104">
    <property type="entry name" value="Hormone_recep"/>
    <property type="match status" value="1"/>
</dbReference>
<dbReference type="Pfam" id="PF00105">
    <property type="entry name" value="zf-C4"/>
    <property type="match status" value="1"/>
</dbReference>
<dbReference type="PRINTS" id="PR00398">
    <property type="entry name" value="STRDHORMONER"/>
</dbReference>
<dbReference type="PRINTS" id="PR00047">
    <property type="entry name" value="STROIDFINGER"/>
</dbReference>
<dbReference type="SMART" id="SM00430">
    <property type="entry name" value="HOLI"/>
    <property type="match status" value="1"/>
</dbReference>
<dbReference type="SMART" id="SM00399">
    <property type="entry name" value="ZnF_C4"/>
    <property type="match status" value="1"/>
</dbReference>
<dbReference type="SUPFAM" id="SSF57716">
    <property type="entry name" value="Glucocorticoid receptor-like (DNA-binding domain)"/>
    <property type="match status" value="1"/>
</dbReference>
<dbReference type="SUPFAM" id="SSF48508">
    <property type="entry name" value="Nuclear receptor ligand-binding domain"/>
    <property type="match status" value="1"/>
</dbReference>
<dbReference type="PROSITE" id="PS51843">
    <property type="entry name" value="NR_LBD"/>
    <property type="match status" value="1"/>
</dbReference>
<dbReference type="PROSITE" id="PS00031">
    <property type="entry name" value="NUCLEAR_REC_DBD_1"/>
    <property type="match status" value="1"/>
</dbReference>
<dbReference type="PROSITE" id="PS51030">
    <property type="entry name" value="NUCLEAR_REC_DBD_2"/>
    <property type="match status" value="1"/>
</dbReference>
<proteinExistence type="evidence at transcript level"/>
<keyword id="KW-0007">Acetylation</keyword>
<keyword id="KW-0010">Activator</keyword>
<keyword id="KW-0090">Biological rhythms</keyword>
<keyword id="KW-0966">Cell projection</keyword>
<keyword id="KW-0963">Cytoplasm</keyword>
<keyword id="KW-0221">Differentiation</keyword>
<keyword id="KW-0238">DNA-binding</keyword>
<keyword id="KW-0349">Heme</keyword>
<keyword id="KW-0408">Iron</keyword>
<keyword id="KW-0479">Metal-binding</keyword>
<keyword id="KW-0539">Nucleus</keyword>
<keyword id="KW-0597">Phosphoprotein</keyword>
<keyword id="KW-0675">Receptor</keyword>
<keyword id="KW-1185">Reference proteome</keyword>
<keyword id="KW-0678">Repressor</keyword>
<keyword id="KW-0770">Synapse</keyword>
<keyword id="KW-0804">Transcription</keyword>
<keyword id="KW-0805">Transcription regulation</keyword>
<keyword id="KW-0832">Ubl conjugation</keyword>
<keyword id="KW-0862">Zinc</keyword>
<keyword id="KW-0863">Zinc-finger</keyword>
<reference key="1">
    <citation type="journal article" date="2009" name="Comp. Biochem. Physiol.">
        <title>Transcriptional feedback loops in the ovine circadian clock.</title>
        <authorList>
            <person name="Dardente H."/>
            <person name="Fustin J.M."/>
            <person name="Hazlerigg D.G."/>
        </authorList>
    </citation>
    <scope>NUCLEOTIDE SEQUENCE [MRNA]</scope>
</reference>
<feature type="chain" id="PRO_0000387613" description="Nuclear receptor subfamily 1 group D member 1">
    <location>
        <begin position="1"/>
        <end position="614"/>
    </location>
</feature>
<feature type="domain" description="NR LBD" evidence="5">
    <location>
        <begin position="285"/>
        <end position="614"/>
    </location>
</feature>
<feature type="DNA-binding region" description="Nuclear receptor" evidence="4">
    <location>
        <begin position="130"/>
        <end position="206"/>
    </location>
</feature>
<feature type="zinc finger region" description="NR C4-type" evidence="4">
    <location>
        <begin position="133"/>
        <end position="153"/>
    </location>
</feature>
<feature type="zinc finger region" description="NR C4-type" evidence="4">
    <location>
        <begin position="170"/>
        <end position="194"/>
    </location>
</feature>
<feature type="region of interest" description="Modulating">
    <location>
        <begin position="1"/>
        <end position="129"/>
    </location>
</feature>
<feature type="region of interest" description="Disordered" evidence="6">
    <location>
        <begin position="1"/>
        <end position="120"/>
    </location>
</feature>
<feature type="region of interest" description="Required for phosphorylation by CSNK1E and cytoplasmic localization" evidence="3">
    <location>
        <begin position="1"/>
        <end position="70"/>
    </location>
</feature>
<feature type="region of interest" description="Crucial for activation of GJA1" evidence="1">
    <location>
        <begin position="49"/>
        <end position="285"/>
    </location>
</feature>
<feature type="region of interest" description="Disordered" evidence="6">
    <location>
        <begin position="233"/>
        <end position="286"/>
    </location>
</feature>
<feature type="compositionally biased region" description="Polar residues" evidence="6">
    <location>
        <begin position="1"/>
        <end position="48"/>
    </location>
</feature>
<feature type="compositionally biased region" description="Low complexity" evidence="6">
    <location>
        <begin position="69"/>
        <end position="103"/>
    </location>
</feature>
<feature type="compositionally biased region" description="Pro residues" evidence="6">
    <location>
        <begin position="239"/>
        <end position="262"/>
    </location>
</feature>
<feature type="binding site" evidence="1">
    <location>
        <position position="418"/>
    </location>
    <ligand>
        <name>heme</name>
        <dbReference type="ChEBI" id="CHEBI:30413"/>
    </ligand>
</feature>
<feature type="binding site" evidence="1">
    <location>
        <position position="602"/>
    </location>
    <ligand>
        <name>heme</name>
        <dbReference type="ChEBI" id="CHEBI:30413"/>
    </ligand>
</feature>
<feature type="modified residue" description="Phosphoserine; by GSK3-beta" evidence="2">
    <location>
        <position position="55"/>
    </location>
</feature>
<feature type="modified residue" description="Phosphoserine; by GSK3-beta" evidence="2">
    <location>
        <position position="59"/>
    </location>
</feature>
<feature type="modified residue" description="N6-acetyllysine; by KAT5" evidence="1">
    <location>
        <position position="192"/>
    </location>
</feature>
<feature type="modified residue" description="N6-acetyllysine; by KAT5" evidence="1">
    <location>
        <position position="193"/>
    </location>
</feature>
<feature type="modified residue" description="Phosphothreonine; by CDK1" evidence="3">
    <location>
        <position position="275"/>
    </location>
</feature>
<feature type="modified residue" description="N6-acetyllysine" evidence="2">
    <location>
        <position position="591"/>
    </location>
</feature>
<name>NR1D1_SHEEP</name>